<gene>
    <name evidence="10" type="primary">NDT80</name>
    <name type="ordered locus">CAALFM_C200140WA</name>
    <name type="ordered locus">orf19.9667</name>
</gene>
<protein>
    <recommendedName>
        <fullName evidence="10">Transcription factor NDT80</fullName>
    </recommendedName>
</protein>
<dbReference type="EMBL" id="CP017624">
    <property type="protein sequence ID" value="AOW27068.1"/>
    <property type="molecule type" value="Genomic_DNA"/>
</dbReference>
<dbReference type="RefSeq" id="XP_719565.1">
    <property type="nucleotide sequence ID" value="XM_714472.2"/>
</dbReference>
<dbReference type="SMR" id="Q5ACU9"/>
<dbReference type="STRING" id="237561.Q5ACU9"/>
<dbReference type="EnsemblFungi" id="C2_00140W_A-T">
    <property type="protein sequence ID" value="C2_00140W_A-T-p1"/>
    <property type="gene ID" value="C2_00140W_A"/>
</dbReference>
<dbReference type="GeneID" id="3638840"/>
<dbReference type="KEGG" id="cal:CAALFM_C200140WA"/>
<dbReference type="CGD" id="CAL0000201259">
    <property type="gene designation" value="NDT80"/>
</dbReference>
<dbReference type="VEuPathDB" id="FungiDB:C2_00140W_A"/>
<dbReference type="eggNOG" id="ENOG502R1FS">
    <property type="taxonomic scope" value="Eukaryota"/>
</dbReference>
<dbReference type="HOGENOM" id="CLU_032654_1_0_1"/>
<dbReference type="InParanoid" id="Q5ACU9"/>
<dbReference type="OMA" id="IFYFDRG"/>
<dbReference type="OrthoDB" id="2288358at2759"/>
<dbReference type="PHI-base" id="PHI:2567"/>
<dbReference type="Proteomes" id="UP000000559">
    <property type="component" value="Chromosome 2"/>
</dbReference>
<dbReference type="GO" id="GO:0000785">
    <property type="term" value="C:chromatin"/>
    <property type="evidence" value="ECO:0000314"/>
    <property type="project" value="CGD"/>
</dbReference>
<dbReference type="GO" id="GO:0000228">
    <property type="term" value="C:nuclear chromosome"/>
    <property type="evidence" value="ECO:0000318"/>
    <property type="project" value="GO_Central"/>
</dbReference>
<dbReference type="GO" id="GO:0005634">
    <property type="term" value="C:nucleus"/>
    <property type="evidence" value="ECO:0000305"/>
    <property type="project" value="CGD"/>
</dbReference>
<dbReference type="GO" id="GO:0001216">
    <property type="term" value="F:DNA-binding transcription activator activity"/>
    <property type="evidence" value="ECO:0000315"/>
    <property type="project" value="CGD"/>
</dbReference>
<dbReference type="GO" id="GO:0003700">
    <property type="term" value="F:DNA-binding transcription factor activity"/>
    <property type="evidence" value="ECO:0000314"/>
    <property type="project" value="CGD"/>
</dbReference>
<dbReference type="GO" id="GO:0043565">
    <property type="term" value="F:sequence-specific DNA binding"/>
    <property type="evidence" value="ECO:0000314"/>
    <property type="project" value="CGD"/>
</dbReference>
<dbReference type="GO" id="GO:0071280">
    <property type="term" value="P:cellular response to copper ion"/>
    <property type="evidence" value="ECO:0000315"/>
    <property type="project" value="CGD"/>
</dbReference>
<dbReference type="GO" id="GO:0071285">
    <property type="term" value="P:cellular response to lithium ion"/>
    <property type="evidence" value="ECO:0000315"/>
    <property type="project" value="CGD"/>
</dbReference>
<dbReference type="GO" id="GO:0097316">
    <property type="term" value="P:cellular response to N-acetyl-D-glucosamine"/>
    <property type="evidence" value="ECO:0000315"/>
    <property type="project" value="CGD"/>
</dbReference>
<dbReference type="GO" id="GO:0034599">
    <property type="term" value="P:cellular response to oxidative stress"/>
    <property type="evidence" value="ECO:0000315"/>
    <property type="project" value="CGD"/>
</dbReference>
<dbReference type="GO" id="GO:0030447">
    <property type="term" value="P:filamentous growth"/>
    <property type="evidence" value="ECO:0000315"/>
    <property type="project" value="CGD"/>
</dbReference>
<dbReference type="GO" id="GO:0036180">
    <property type="term" value="P:filamentous growth of a population of unicellular organisms in response to biotic stimulus"/>
    <property type="evidence" value="ECO:0000315"/>
    <property type="project" value="CGD"/>
</dbReference>
<dbReference type="GO" id="GO:0036171">
    <property type="term" value="P:filamentous growth of a population of unicellular organisms in response to chemical stimulus"/>
    <property type="evidence" value="ECO:0000315"/>
    <property type="project" value="CGD"/>
</dbReference>
<dbReference type="GO" id="GO:0036177">
    <property type="term" value="P:filamentous growth of a population of unicellular organisms in response to pH"/>
    <property type="evidence" value="ECO:0000315"/>
    <property type="project" value="CGD"/>
</dbReference>
<dbReference type="GO" id="GO:0030448">
    <property type="term" value="P:hyphal growth"/>
    <property type="evidence" value="ECO:0000315"/>
    <property type="project" value="CGD"/>
</dbReference>
<dbReference type="GO" id="GO:0051321">
    <property type="term" value="P:meiotic cell cycle"/>
    <property type="evidence" value="ECO:0000318"/>
    <property type="project" value="GO_Central"/>
</dbReference>
<dbReference type="GO" id="GO:1900445">
    <property type="term" value="P:positive regulation of filamentous growth of a population of unicellular organisms in response to biotic stimulus"/>
    <property type="evidence" value="ECO:0000315"/>
    <property type="project" value="CGD"/>
</dbReference>
<dbReference type="GO" id="GO:1900439">
    <property type="term" value="P:positive regulation of filamentous growth of a population of unicellular organisms in response to chemical stimulus"/>
    <property type="evidence" value="ECO:0000315"/>
    <property type="project" value="CGD"/>
</dbReference>
<dbReference type="GO" id="GO:1900743">
    <property type="term" value="P:positive regulation of filamentous growth of a population of unicellular organisms in response to pH"/>
    <property type="evidence" value="ECO:0000315"/>
    <property type="project" value="CGD"/>
</dbReference>
<dbReference type="GO" id="GO:0045944">
    <property type="term" value="P:positive regulation of transcription by RNA polymerase II"/>
    <property type="evidence" value="ECO:0000315"/>
    <property type="project" value="CGD"/>
</dbReference>
<dbReference type="GO" id="GO:1900231">
    <property type="term" value="P:regulation of single-species biofilm formation on inanimate substrate"/>
    <property type="evidence" value="ECO:0000315"/>
    <property type="project" value="CGD"/>
</dbReference>
<dbReference type="GO" id="GO:0006357">
    <property type="term" value="P:regulation of transcription by RNA polymerase II"/>
    <property type="evidence" value="ECO:0000315"/>
    <property type="project" value="CGD"/>
</dbReference>
<dbReference type="GO" id="GO:0044011">
    <property type="term" value="P:single-species biofilm formation on inanimate substrate"/>
    <property type="evidence" value="ECO:0000315"/>
    <property type="project" value="CGD"/>
</dbReference>
<dbReference type="Gene3D" id="2.60.40.1390">
    <property type="entry name" value="NDT80 DNA-binding domain"/>
    <property type="match status" value="1"/>
</dbReference>
<dbReference type="InterPro" id="IPR052605">
    <property type="entry name" value="Fungal_trans_regulator"/>
</dbReference>
<dbReference type="InterPro" id="IPR024061">
    <property type="entry name" value="NDT80_DNA-bd_dom"/>
</dbReference>
<dbReference type="InterPro" id="IPR037141">
    <property type="entry name" value="NDT80_DNA-bd_dom_sf"/>
</dbReference>
<dbReference type="InterPro" id="IPR008967">
    <property type="entry name" value="p53-like_TF_DNA-bd_sf"/>
</dbReference>
<dbReference type="PANTHER" id="PTHR35144">
    <property type="entry name" value="MEIOSIS-SPECIFIC TRANSCRIPTION FACTOR NDT80"/>
    <property type="match status" value="1"/>
</dbReference>
<dbReference type="PANTHER" id="PTHR35144:SF2">
    <property type="entry name" value="MEIOSIS-SPECIFIC TRANSCRIPTION FACTOR NDT80"/>
    <property type="match status" value="1"/>
</dbReference>
<dbReference type="Pfam" id="PF05224">
    <property type="entry name" value="NDT80_PhoG"/>
    <property type="match status" value="1"/>
</dbReference>
<dbReference type="SUPFAM" id="SSF49417">
    <property type="entry name" value="p53-like transcription factors"/>
    <property type="match status" value="1"/>
</dbReference>
<dbReference type="PROSITE" id="PS51517">
    <property type="entry name" value="NDT80"/>
    <property type="match status" value="1"/>
</dbReference>
<proteinExistence type="evidence at protein level"/>
<comment type="function">
    <text evidence="3 4 5 6 7 8 9">Meiosis-specific transcription factor that binds to the middle sporulation element (MSE) of targeted genes corresponding to the consensus sequence 5'-ACACAAA-3' (PubMed:19542309). Acts as an activator of CDR1 induction by antifungal drugs (PubMed:15561818). Modulates azole sensitivity by controlling the expression of ergosterol biosynthesis genes (PubMed:19542309). Required for hyphal growth in response to different filament-inducing cues and for the proper expression of genes characterizing the filamentous transcriptional program including noteworthy genes encoding cell wall components, such as HWP1, ECE1, RBT4, and ALS3 (PubMed:20097739). Is essential for the completion of cell separation through the direct transcriptional regulation of genes encoding the chitinase CHT3 and the cell wall glucosidase SUN41 (PubMed:20097739). Required for biofilm formation and plays a key role in microcolony formation under both flow and static conditions and to epithelial surfaces (PubMed:22265407, PubMed:23637598, PubMed:28793308, PubMed:30252918). Essential for virulence (PubMed:20097739).</text>
</comment>
<comment type="subcellular location">
    <subcellularLocation>
        <location evidence="11">Nucleus</location>
    </subcellularLocation>
</comment>
<comment type="induction">
    <text evidence="6">Induced during biofilm formation.</text>
</comment>
<comment type="disruption phenotype">
    <text evidence="3 5 7">Abolishes the induction of CDR1 expression in the presence of miconazole and increases susceptibilities to antifungal agents (PubMed:15561818). Severely reduces conventional biofilm formation but increases pheromone-stimulated biofilm formation (PubMed:23637598). Compromises expression of SUN41 and CHT3 genes, leading to a defect in cell separation and growth as chains of cells (PubMed:20097739). Impairs virulence in a mouse model of systemic candidiasis (PubMed:20097739).</text>
</comment>
<organism>
    <name type="scientific">Candida albicans (strain SC5314 / ATCC MYA-2876)</name>
    <name type="common">Yeast</name>
    <dbReference type="NCBI Taxonomy" id="237561"/>
    <lineage>
        <taxon>Eukaryota</taxon>
        <taxon>Fungi</taxon>
        <taxon>Dikarya</taxon>
        <taxon>Ascomycota</taxon>
        <taxon>Saccharomycotina</taxon>
        <taxon>Pichiomycetes</taxon>
        <taxon>Debaryomycetaceae</taxon>
        <taxon>Candida/Lodderomyces clade</taxon>
        <taxon>Candida</taxon>
    </lineage>
</organism>
<sequence length="504" mass="58214">MHPSAGVNNNQHLNHQPYQQMSHYNAQQMHQQQLHHQLMTPNPYQQHFQQQMHPQLHHEDHLNMHFNPMSYPQQQQQQQQQQQQQQQHLHHFGHQIPAPPAQQGPTPQQPHLHQQIPHPLSHHQTPQPTPQPLAQQQSPQPARQPRQTKKQKQQAQNQDQADAQSQAQQHHMAMMARANQNDMLESSTRKVAPRSSDLFRVGPPFSISKQHQPVYCVGTDMPVTPLLHARIDRGFEMGETGSWIGYKRNYFTLVASFTLQDFDFEKFIGNKFYTYDKVNNKVNGFPPHHPSHPQNQPQNHPGHPHHNQHAGESRVPISYFAIRLVAKCSDEDVAISLIQHTAKRDKGPQFPPPIYPAVPSELPDHETVKVSCNKRNNNKIETMNKIFYFDRGNYYQEYNLDSYKDQSILKSYPSQSISKVARFERIQFTSSIRVKSTNTTARYFTLHVELLGIIEDEDLQIQPILLSSIESPPLIVRGRSPSSYHKDRTSGYRATNTPTPTPPQ</sequence>
<keyword id="KW-0238">DNA-binding</keyword>
<keyword id="KW-0539">Nucleus</keyword>
<keyword id="KW-1185">Reference proteome</keyword>
<keyword id="KW-0804">Transcription</keyword>
<keyword id="KW-0805">Transcription regulation</keyword>
<name>NDT80_CANAL</name>
<reference key="1">
    <citation type="journal article" date="2004" name="Proc. Natl. Acad. Sci. U.S.A.">
        <title>The diploid genome sequence of Candida albicans.</title>
        <authorList>
            <person name="Jones T."/>
            <person name="Federspiel N.A."/>
            <person name="Chibana H."/>
            <person name="Dungan J."/>
            <person name="Kalman S."/>
            <person name="Magee B.B."/>
            <person name="Newport G."/>
            <person name="Thorstenson Y.R."/>
            <person name="Agabian N."/>
            <person name="Magee P.T."/>
            <person name="Davis R.W."/>
            <person name="Scherer S."/>
        </authorList>
    </citation>
    <scope>NUCLEOTIDE SEQUENCE [LARGE SCALE GENOMIC DNA]</scope>
    <source>
        <strain>SC5314 / ATCC MYA-2876</strain>
    </source>
</reference>
<reference key="2">
    <citation type="journal article" date="2007" name="Genome Biol.">
        <title>Assembly of the Candida albicans genome into sixteen supercontigs aligned on the eight chromosomes.</title>
        <authorList>
            <person name="van het Hoog M."/>
            <person name="Rast T.J."/>
            <person name="Martchenko M."/>
            <person name="Grindle S."/>
            <person name="Dignard D."/>
            <person name="Hogues H."/>
            <person name="Cuomo C."/>
            <person name="Berriman M."/>
            <person name="Scherer S."/>
            <person name="Magee B.B."/>
            <person name="Whiteway M."/>
            <person name="Chibana H."/>
            <person name="Nantel A."/>
            <person name="Magee P.T."/>
        </authorList>
    </citation>
    <scope>GENOME REANNOTATION</scope>
    <source>
        <strain>SC5314 / ATCC MYA-2876</strain>
    </source>
</reference>
<reference key="3">
    <citation type="journal article" date="2013" name="Genome Biol.">
        <title>Assembly of a phased diploid Candida albicans genome facilitates allele-specific measurements and provides a simple model for repeat and indel structure.</title>
        <authorList>
            <person name="Muzzey D."/>
            <person name="Schwartz K."/>
            <person name="Weissman J.S."/>
            <person name="Sherlock G."/>
        </authorList>
    </citation>
    <scope>NUCLEOTIDE SEQUENCE [LARGE SCALE GENOMIC DNA]</scope>
    <scope>GENOME REANNOTATION</scope>
    <source>
        <strain>SC5314 / ATCC MYA-2876</strain>
    </source>
</reference>
<reference key="4">
    <citation type="journal article" date="2004" name="Antimicrob. Agents Chemother.">
        <title>CaNdt80 is involved in drug resistance in Candida albicans by regulating CDR1.</title>
        <authorList>
            <person name="Chen C.G."/>
            <person name="Yang Y.L."/>
            <person name="Shih H.I."/>
            <person name="Su C.L."/>
            <person name="Lo H.J."/>
        </authorList>
    </citation>
    <scope>FUNCTION</scope>
    <scope>DISRUPTION PHENOTYPE</scope>
</reference>
<reference key="5">
    <citation type="journal article" date="2009" name="Eukaryot. Cell">
        <title>Role of Ndt80p in sterol metabolism regulation and azole resistance in Candida albicans.</title>
        <authorList>
            <person name="Sellam A."/>
            <person name="Tebbji F."/>
            <person name="Nantel A."/>
        </authorList>
    </citation>
    <scope>FUNCTION</scope>
    <scope>DNA-BINDING</scope>
</reference>
<reference key="6">
    <citation type="journal article" date="2010" name="Eukaryot. Cell">
        <title>Role of transcription factor CaNdt80p in cell separation, hyphal growth, and virulence in Candida albicans.</title>
        <authorList>
            <person name="Sellam A."/>
            <person name="Askew C."/>
            <person name="Epp E."/>
            <person name="Tebbji F."/>
            <person name="Mullick A."/>
            <person name="Whiteway M."/>
            <person name="Nantel A."/>
        </authorList>
    </citation>
    <scope>FUNCTION</scope>
    <scope>DISRUPTION PHENOTYPE</scope>
</reference>
<reference key="7">
    <citation type="journal article" date="2012" name="Cell">
        <title>A recently evolved transcriptional network controls biofilm development in Candida albicans.</title>
        <authorList>
            <person name="Nobile C.J."/>
            <person name="Fox E.P."/>
            <person name="Nett J.E."/>
            <person name="Sorrells T.R."/>
            <person name="Mitrovich Q.M."/>
            <person name="Hernday A.D."/>
            <person name="Tuch B.B."/>
            <person name="Andes D.R."/>
            <person name="Johnson A.D."/>
        </authorList>
    </citation>
    <scope>FUNCTION</scope>
    <scope>INDUCTION</scope>
</reference>
<reference key="8">
    <citation type="journal article" date="2013" name="PLoS Pathog.">
        <title>Genetic control of conventional and pheromone-stimulated biofilm formation in Candida albicans.</title>
        <authorList>
            <person name="Lin C.H."/>
            <person name="Kabrawala S."/>
            <person name="Fox E.P."/>
            <person name="Nobile C.J."/>
            <person name="Johnson A.D."/>
            <person name="Bennett R.J."/>
        </authorList>
    </citation>
    <scope>FUNCTION</scope>
    <scope>DISRUPTION PHENOTYPE</scope>
</reference>
<reference key="9">
    <citation type="journal article" date="2017" name="PLoS Genet.">
        <title>Genetic analysis of the Candida albicans biofilm transcription factor network using simple and complex haploinsufficiency.</title>
        <authorList>
            <person name="Glazier V.E."/>
            <person name="Murante T."/>
            <person name="Murante D."/>
            <person name="Koselny K."/>
            <person name="Liu Y."/>
            <person name="Kim D."/>
            <person name="Koo H."/>
            <person name="Krysan D.J."/>
        </authorList>
    </citation>
    <scope>FUNCTION</scope>
</reference>
<reference key="10">
    <citation type="journal article" date="2018" name="PLoS Pathog.">
        <title>Candida albicans Sfl1/Sfl2 regulatory network drives the formation of pathogenic microcolonies.</title>
        <authorList>
            <person name="McCall A.D."/>
            <person name="Kumar R."/>
            <person name="Edgerton M."/>
        </authorList>
    </citation>
    <scope>FUNCTION</scope>
</reference>
<accession>Q5ACU9</accession>
<feature type="chain" id="PRO_0000459382" description="Transcription factor NDT80">
    <location>
        <begin position="1"/>
        <end position="504"/>
    </location>
</feature>
<feature type="DNA-binding region" description="NDT80" evidence="1">
    <location>
        <begin position="160"/>
        <end position="488"/>
    </location>
</feature>
<feature type="region of interest" description="Disordered" evidence="2">
    <location>
        <begin position="64"/>
        <end position="172"/>
    </location>
</feature>
<feature type="region of interest" description="Disordered" evidence="2">
    <location>
        <begin position="283"/>
        <end position="310"/>
    </location>
</feature>
<feature type="region of interest" description="Disordered" evidence="2">
    <location>
        <begin position="477"/>
        <end position="504"/>
    </location>
</feature>
<feature type="compositionally biased region" description="Low complexity" evidence="2">
    <location>
        <begin position="73"/>
        <end position="87"/>
    </location>
</feature>
<feature type="compositionally biased region" description="Low complexity" evidence="2">
    <location>
        <begin position="103"/>
        <end position="145"/>
    </location>
</feature>
<feature type="compositionally biased region" description="Low complexity" evidence="2">
    <location>
        <begin position="153"/>
        <end position="172"/>
    </location>
</feature>
<feature type="compositionally biased region" description="Low complexity" evidence="2">
    <location>
        <begin position="292"/>
        <end position="301"/>
    </location>
</feature>
<evidence type="ECO:0000255" key="1">
    <source>
        <dbReference type="PROSITE-ProRule" id="PRU00850"/>
    </source>
</evidence>
<evidence type="ECO:0000256" key="2">
    <source>
        <dbReference type="SAM" id="MobiDB-lite"/>
    </source>
</evidence>
<evidence type="ECO:0000269" key="3">
    <source>
    </source>
</evidence>
<evidence type="ECO:0000269" key="4">
    <source>
    </source>
</evidence>
<evidence type="ECO:0000269" key="5">
    <source>
    </source>
</evidence>
<evidence type="ECO:0000269" key="6">
    <source>
    </source>
</evidence>
<evidence type="ECO:0000269" key="7">
    <source>
    </source>
</evidence>
<evidence type="ECO:0000269" key="8">
    <source>
    </source>
</evidence>
<evidence type="ECO:0000269" key="9">
    <source>
    </source>
</evidence>
<evidence type="ECO:0000303" key="10">
    <source>
    </source>
</evidence>
<evidence type="ECO:0000305" key="11">
    <source>
    </source>
</evidence>